<accession>Q8IXA5</accession>
<accession>Q7Z4Y5</accession>
<proteinExistence type="evidence at protein level"/>
<dbReference type="EMBL" id="AF216311">
    <property type="protein sequence ID" value="AAK01478.1"/>
    <property type="molecule type" value="mRNA"/>
</dbReference>
<dbReference type="EMBL" id="AF099029">
    <property type="protein sequence ID" value="AAP97222.1"/>
    <property type="molecule type" value="Genomic_DNA"/>
</dbReference>
<dbReference type="EMBL" id="AY358653">
    <property type="protein sequence ID" value="AAQ89016.1"/>
    <property type="molecule type" value="mRNA"/>
</dbReference>
<dbReference type="EMBL" id="BC100886">
    <property type="protein sequence ID" value="AAI00887.1"/>
    <property type="molecule type" value="mRNA"/>
</dbReference>
<dbReference type="EMBL" id="BC100887">
    <property type="protein sequence ID" value="AAI00888.1"/>
    <property type="molecule type" value="mRNA"/>
</dbReference>
<dbReference type="CCDS" id="CCDS11275.1">
    <molecule id="Q8IXA5-1"/>
</dbReference>
<dbReference type="RefSeq" id="NP_001304155.1">
    <property type="nucleotide sequence ID" value="NM_001317226.1"/>
</dbReference>
<dbReference type="RefSeq" id="NP_776246.1">
    <molecule id="Q8IXA5-1"/>
    <property type="nucleotide sequence ID" value="NM_173847.5"/>
</dbReference>
<dbReference type="SMR" id="Q8IXA5"/>
<dbReference type="BioGRID" id="125897">
    <property type="interactions" value="29"/>
</dbReference>
<dbReference type="FunCoup" id="Q8IXA5">
    <property type="interactions" value="20"/>
</dbReference>
<dbReference type="IntAct" id="Q8IXA5">
    <property type="interactions" value="7"/>
</dbReference>
<dbReference type="STRING" id="9606.ENSP00000269053"/>
<dbReference type="CAZy" id="GH22">
    <property type="family name" value="Glycoside Hydrolase Family 22"/>
</dbReference>
<dbReference type="GlyGen" id="Q8IXA5">
    <property type="glycosylation" value="1 site, 1 O-linked glycan (1 site)"/>
</dbReference>
<dbReference type="iPTMnet" id="Q8IXA5"/>
<dbReference type="PhosphoSitePlus" id="Q8IXA5"/>
<dbReference type="BioMuta" id="SPACA3"/>
<dbReference type="DMDM" id="74723659"/>
<dbReference type="jPOST" id="Q8IXA5"/>
<dbReference type="MassIVE" id="Q8IXA5"/>
<dbReference type="PaxDb" id="9606-ENSP00000269053"/>
<dbReference type="PeptideAtlas" id="Q8IXA5"/>
<dbReference type="ProteomicsDB" id="70978">
    <molecule id="Q8IXA5-1"/>
</dbReference>
<dbReference type="ProteomicsDB" id="70979">
    <molecule id="Q8IXA5-2"/>
</dbReference>
<dbReference type="Antibodypedia" id="15460">
    <property type="antibodies" value="100 antibodies from 22 providers"/>
</dbReference>
<dbReference type="DNASU" id="124912"/>
<dbReference type="Ensembl" id="ENST00000269053.8">
    <molecule id="Q8IXA5-1"/>
    <property type="protein sequence ID" value="ENSP00000269053.3"/>
    <property type="gene ID" value="ENSG00000141316.13"/>
</dbReference>
<dbReference type="Ensembl" id="ENST00000580599.5">
    <molecule id="Q8IXA5-2"/>
    <property type="protein sequence ID" value="ENSP00000463386.1"/>
    <property type="gene ID" value="ENSG00000141316.13"/>
</dbReference>
<dbReference type="GeneID" id="124912"/>
<dbReference type="KEGG" id="hsa:124912"/>
<dbReference type="MANE-Select" id="ENST00000269053.8">
    <property type="protein sequence ID" value="ENSP00000269053.3"/>
    <property type="RefSeq nucleotide sequence ID" value="NM_173847.5"/>
    <property type="RefSeq protein sequence ID" value="NP_776246.1"/>
</dbReference>
<dbReference type="UCSC" id="uc002hhs.2">
    <molecule id="Q8IXA5-1"/>
    <property type="organism name" value="human"/>
</dbReference>
<dbReference type="AGR" id="HGNC:16260"/>
<dbReference type="CTD" id="124912"/>
<dbReference type="DisGeNET" id="124912"/>
<dbReference type="GeneCards" id="SPACA3"/>
<dbReference type="HGNC" id="HGNC:16260">
    <property type="gene designation" value="SPACA3"/>
</dbReference>
<dbReference type="HPA" id="ENSG00000141316">
    <property type="expression patterns" value="Tissue enriched (testis)"/>
</dbReference>
<dbReference type="MIM" id="612749">
    <property type="type" value="gene"/>
</dbReference>
<dbReference type="neXtProt" id="NX_Q8IXA5"/>
<dbReference type="OpenTargets" id="ENSG00000141316"/>
<dbReference type="PharmGKB" id="PA38101"/>
<dbReference type="VEuPathDB" id="HostDB:ENSG00000141316"/>
<dbReference type="eggNOG" id="ENOG502S1F5">
    <property type="taxonomic scope" value="Eukaryota"/>
</dbReference>
<dbReference type="GeneTree" id="ENSGT00940000161810"/>
<dbReference type="HOGENOM" id="CLU_111620_1_1_1"/>
<dbReference type="InParanoid" id="Q8IXA5"/>
<dbReference type="OMA" id="MYCTDLL"/>
<dbReference type="OrthoDB" id="17373at2759"/>
<dbReference type="PAN-GO" id="Q8IXA5">
    <property type="GO annotations" value="3 GO annotations based on evolutionary models"/>
</dbReference>
<dbReference type="PhylomeDB" id="Q8IXA5"/>
<dbReference type="TreeFam" id="TF324882"/>
<dbReference type="PathwayCommons" id="Q8IXA5"/>
<dbReference type="SignaLink" id="Q8IXA5"/>
<dbReference type="BioGRID-ORCS" id="124912">
    <property type="hits" value="14 hits in 1145 CRISPR screens"/>
</dbReference>
<dbReference type="ChiTaRS" id="SPACA3">
    <property type="organism name" value="human"/>
</dbReference>
<dbReference type="GeneWiki" id="SPACA3"/>
<dbReference type="GenomeRNAi" id="124912"/>
<dbReference type="Pharos" id="Q8IXA5">
    <property type="development level" value="Tbio"/>
</dbReference>
<dbReference type="PRO" id="PR:Q8IXA5"/>
<dbReference type="Proteomes" id="UP000005640">
    <property type="component" value="Chromosome 17"/>
</dbReference>
<dbReference type="RNAct" id="Q8IXA5">
    <property type="molecule type" value="protein"/>
</dbReference>
<dbReference type="Bgee" id="ENSG00000141316">
    <property type="expression patterns" value="Expressed in left testis and 106 other cell types or tissues"/>
</dbReference>
<dbReference type="ExpressionAtlas" id="Q8IXA5">
    <property type="expression patterns" value="baseline and differential"/>
</dbReference>
<dbReference type="GO" id="GO:0043159">
    <property type="term" value="C:acrosomal matrix"/>
    <property type="evidence" value="ECO:0000314"/>
    <property type="project" value="UniProtKB"/>
</dbReference>
<dbReference type="GO" id="GO:0002080">
    <property type="term" value="C:acrosomal membrane"/>
    <property type="evidence" value="ECO:0000314"/>
    <property type="project" value="UniProtKB"/>
</dbReference>
<dbReference type="GO" id="GO:0001669">
    <property type="term" value="C:acrosomal vesicle"/>
    <property type="evidence" value="ECO:0000318"/>
    <property type="project" value="GO_Central"/>
</dbReference>
<dbReference type="GO" id="GO:0005576">
    <property type="term" value="C:extracellular region"/>
    <property type="evidence" value="ECO:0007669"/>
    <property type="project" value="UniProtKB-SubCell"/>
</dbReference>
<dbReference type="GO" id="GO:0030141">
    <property type="term" value="C:secretory granule"/>
    <property type="evidence" value="ECO:0000314"/>
    <property type="project" value="UniProtKB"/>
</dbReference>
<dbReference type="GO" id="GO:0036126">
    <property type="term" value="C:sperm flagellum"/>
    <property type="evidence" value="ECO:0000318"/>
    <property type="project" value="GO_Central"/>
</dbReference>
<dbReference type="GO" id="GO:0007342">
    <property type="term" value="P:fusion of sperm to egg plasma membrane involved in single fertilization"/>
    <property type="evidence" value="ECO:0000315"/>
    <property type="project" value="UniProtKB"/>
</dbReference>
<dbReference type="GO" id="GO:0042117">
    <property type="term" value="P:monocyte activation"/>
    <property type="evidence" value="ECO:0000304"/>
    <property type="project" value="UniProtKB"/>
</dbReference>
<dbReference type="GO" id="GO:0043032">
    <property type="term" value="P:positive regulation of macrophage activation"/>
    <property type="evidence" value="ECO:0000304"/>
    <property type="project" value="UniProtKB"/>
</dbReference>
<dbReference type="GO" id="GO:0050766">
    <property type="term" value="P:positive regulation of phagocytosis"/>
    <property type="evidence" value="ECO:0000304"/>
    <property type="project" value="UniProtKB"/>
</dbReference>
<dbReference type="GO" id="GO:0035036">
    <property type="term" value="P:sperm-egg recognition"/>
    <property type="evidence" value="ECO:0007669"/>
    <property type="project" value="Ensembl"/>
</dbReference>
<dbReference type="CDD" id="cd16897">
    <property type="entry name" value="LYZ_C"/>
    <property type="match status" value="1"/>
</dbReference>
<dbReference type="FunFam" id="1.10.530.10:FF:000001">
    <property type="entry name" value="Lysozyme C"/>
    <property type="match status" value="1"/>
</dbReference>
<dbReference type="Gene3D" id="1.10.530.10">
    <property type="match status" value="1"/>
</dbReference>
<dbReference type="InterPro" id="IPR001916">
    <property type="entry name" value="Glyco_hydro_22"/>
</dbReference>
<dbReference type="InterPro" id="IPR019799">
    <property type="entry name" value="Glyco_hydro_22_CS"/>
</dbReference>
<dbReference type="InterPro" id="IPR000974">
    <property type="entry name" value="Glyco_hydro_22_lys"/>
</dbReference>
<dbReference type="InterPro" id="IPR023346">
    <property type="entry name" value="Lysozyme-like_dom_sf"/>
</dbReference>
<dbReference type="PANTHER" id="PTHR11407">
    <property type="entry name" value="LYSOZYME C"/>
    <property type="match status" value="1"/>
</dbReference>
<dbReference type="PANTHER" id="PTHR11407:SF25">
    <property type="entry name" value="SPERM ACROSOME MEMBRANE-ASSOCIATED PROTEIN 3"/>
    <property type="match status" value="1"/>
</dbReference>
<dbReference type="Pfam" id="PF00062">
    <property type="entry name" value="Lys"/>
    <property type="match status" value="1"/>
</dbReference>
<dbReference type="PRINTS" id="PR00137">
    <property type="entry name" value="LYSOZYME"/>
</dbReference>
<dbReference type="PRINTS" id="PR00135">
    <property type="entry name" value="LYZLACT"/>
</dbReference>
<dbReference type="SMART" id="SM00263">
    <property type="entry name" value="LYZ1"/>
    <property type="match status" value="1"/>
</dbReference>
<dbReference type="SUPFAM" id="SSF53955">
    <property type="entry name" value="Lysozyme-like"/>
    <property type="match status" value="1"/>
</dbReference>
<dbReference type="PROSITE" id="PS00128">
    <property type="entry name" value="GLYCOSYL_HYDROL_F22_1"/>
    <property type="match status" value="1"/>
</dbReference>
<dbReference type="PROSITE" id="PS51348">
    <property type="entry name" value="GLYCOSYL_HYDROL_F22_2"/>
    <property type="match status" value="1"/>
</dbReference>
<evidence type="ECO:0000250" key="1"/>
<evidence type="ECO:0000255" key="2"/>
<evidence type="ECO:0000255" key="3">
    <source>
        <dbReference type="PROSITE-ProRule" id="PRU00680"/>
    </source>
</evidence>
<evidence type="ECO:0000269" key="4">
    <source>
    </source>
</evidence>
<evidence type="ECO:0000269" key="5">
    <source>
    </source>
</evidence>
<evidence type="ECO:0000303" key="6">
    <source>
    </source>
</evidence>
<evidence type="ECO:0000305" key="7"/>
<gene>
    <name type="primary">SPACA3</name>
    <name type="synonym">LYC3</name>
    <name type="synonym">LYZL3</name>
    <name type="synonym">SLLP1</name>
    <name type="synonym">SPRASA</name>
    <name type="ORF">UNQ424/PRO862</name>
</gene>
<name>SACA3_HUMAN</name>
<organism>
    <name type="scientific">Homo sapiens</name>
    <name type="common">Human</name>
    <dbReference type="NCBI Taxonomy" id="9606"/>
    <lineage>
        <taxon>Eukaryota</taxon>
        <taxon>Metazoa</taxon>
        <taxon>Chordata</taxon>
        <taxon>Craniata</taxon>
        <taxon>Vertebrata</taxon>
        <taxon>Euteleostomi</taxon>
        <taxon>Mammalia</taxon>
        <taxon>Eutheria</taxon>
        <taxon>Euarchontoglires</taxon>
        <taxon>Primates</taxon>
        <taxon>Haplorrhini</taxon>
        <taxon>Catarrhini</taxon>
        <taxon>Hominidae</taxon>
        <taxon>Homo</taxon>
    </lineage>
</organism>
<protein>
    <recommendedName>
        <fullName>Sperm acrosome membrane-associated protein 3</fullName>
    </recommendedName>
    <alternativeName>
        <fullName>Cancer/testis antigen 54</fullName>
        <shortName>CT54</shortName>
    </alternativeName>
    <alternativeName>
        <fullName>Lysozyme-like acrosomal sperm-specific secretory protein ALLP-17</fullName>
    </alternativeName>
    <alternativeName>
        <fullName>Lysozyme-like protein 3</fullName>
    </alternativeName>
    <alternativeName>
        <fullName>Sperm lysozyme-like protein 1</fullName>
    </alternativeName>
    <alternativeName>
        <fullName>Sperm protein reactive with antisperm antibodies</fullName>
        <shortName>Sperm protein reactive with ASA</shortName>
    </alternativeName>
    <component>
        <recommendedName>
            <fullName>Sperm acrosome membrane-associated protein 3, membrane form</fullName>
        </recommendedName>
    </component>
    <component>
        <recommendedName>
            <fullName>Sperm acrosome membrane-associated protein 3, processed form</fullName>
        </recommendedName>
    </component>
</protein>
<sequence>MVSALRGAPLIRVHSSPVSSPSVSGPRRLVSCLSSQSSALSQSGGGSTSAAGIEARSRALRRRWCPAGIMLLALVCLLSCLLPSSEAKLYGRCELARVLHDFGLDGYRGYSLADWVCLAYFTSGFNAAALDYEADGSTNNGIFQINSRRWCSNLTPNVPNVCRMYCSDLLNPNLKDTVICAMKITQEPQGLGYWEAWRHHCQGKDLTEWVDGCDF</sequence>
<feature type="chain" id="PRO_0000256219" description="Sperm acrosome membrane-associated protein 3, membrane form">
    <location>
        <begin position="1"/>
        <end position="215"/>
    </location>
</feature>
<feature type="chain" id="PRO_0000256220" description="Sperm acrosome membrane-associated protein 3, processed form">
    <location>
        <begin position="88"/>
        <end position="215"/>
    </location>
</feature>
<feature type="topological domain" description="Cytoplasmic" evidence="2">
    <location>
        <begin position="1"/>
        <end position="63"/>
    </location>
</feature>
<feature type="transmembrane region" description="Helical; Signal-anchor for type II membrane protein" evidence="2">
    <location>
        <begin position="64"/>
        <end position="84"/>
    </location>
</feature>
<feature type="topological domain" description="Extracellular" evidence="2">
    <location>
        <begin position="85"/>
        <end position="215"/>
    </location>
</feature>
<feature type="domain" description="C-type lysozyme" evidence="3">
    <location>
        <begin position="88"/>
        <end position="215"/>
    </location>
</feature>
<feature type="site" description="Cleavage; to produce processed form" evidence="7">
    <location>
        <begin position="87"/>
        <end position="88"/>
    </location>
</feature>
<feature type="disulfide bond" evidence="3">
    <location>
        <begin position="93"/>
        <end position="213"/>
    </location>
</feature>
<feature type="disulfide bond" evidence="3">
    <location>
        <begin position="117"/>
        <end position="201"/>
    </location>
</feature>
<feature type="disulfide bond" evidence="3">
    <location>
        <begin position="151"/>
        <end position="166"/>
    </location>
</feature>
<feature type="disulfide bond" evidence="3">
    <location>
        <begin position="162"/>
        <end position="180"/>
    </location>
</feature>
<feature type="splice variant" id="VSP_021329" description="In isoform 2." evidence="6">
    <location>
        <begin position="1"/>
        <end position="69"/>
    </location>
</feature>
<feature type="sequence variant" id="VAR_028885" description="In dbSNP:rs16967845.">
    <original>C</original>
    <variation>Y</variation>
    <location>
        <position position="80"/>
    </location>
</feature>
<feature type="sequence variant" id="VAR_028886" description="In dbSNP:rs28963.">
    <original>H</original>
    <variation>R</variation>
    <location>
        <position position="100"/>
    </location>
</feature>
<feature type="sequence variant" id="VAR_050008" description="In dbSNP:rs35420663.">
    <original>A</original>
    <variation>T</variation>
    <location>
        <position position="128"/>
    </location>
</feature>
<comment type="function">
    <text evidence="4">Sperm surface membrane protein that may be involved in sperm-egg plasma membrane adhesion and fusion during fertilization. It could be a potential receptor for the egg oligosaccharide residue N-acetylglucosamine, which is present in the extracellular matrix over the egg plasma membrane. The processed form has no detectable bacteriolytic activity in vitro.</text>
</comment>
<comment type="subunit">
    <text evidence="1">Interacts with ASTL.</text>
</comment>
<comment type="subcellular location">
    <molecule>Isoform 1</molecule>
    <subcellularLocation>
        <location evidence="7">Cytoplasmic vesicle</location>
        <location evidence="7">Secretory vesicle</location>
        <location evidence="7">Acrosome membrane</location>
        <topology evidence="7">Single-pass type II membrane protein</topology>
    </subcellularLocation>
    <text evidence="1">Anterior acrosome in non-capacitated spermatozoa and retained in the equatorial segment and in the luminal face of both the inner and outer acrosomal membranes following capacitation and the acrosome reaction.</text>
</comment>
<comment type="subcellular location">
    <molecule>Isoform 2</molecule>
    <subcellularLocation>
        <location evidence="7">Secreted</location>
    </subcellularLocation>
</comment>
<comment type="alternative products">
    <event type="alternative splicing"/>
    <isoform>
        <id>Q8IXA5-1</id>
        <name>1</name>
        <sequence type="displayed"/>
    </isoform>
    <isoform>
        <id>Q8IXA5-2</id>
        <name>2</name>
        <sequence type="described" ref="VSP_021329"/>
    </isoform>
</comment>
<comment type="tissue specificity">
    <text evidence="4 5">The processed form is expressed in sperm (at protein level). Expressed in testis, epididymis and placenta.</text>
</comment>
<comment type="PTM">
    <text>The processed form derives from the membrane form by proteolytic processing.</text>
</comment>
<comment type="similarity">
    <text evidence="3">Belongs to the glycosyl hydrolase 22 family.</text>
</comment>
<comment type="caution">
    <text evidence="7">Although it belongs to the glycosyl hydrolase 22 family, Thr-122 and Asn-139 are present instead of the conserved Glu and Asp which are active site residues. It is therefore expected that this protein lacks hydrolase activity.</text>
</comment>
<reference key="1">
    <citation type="journal article" date="2003" name="Biol. Reprod.">
        <title>SLLP1, a unique, intra-acrosomal, non-bacteriolytic, c lysozyme-like protein of human spermatozoa.</title>
        <authorList>
            <person name="Mandal A."/>
            <person name="Klotz K.L."/>
            <person name="Shetty J."/>
            <person name="Jayes F.L."/>
            <person name="Wolkowicz M.J."/>
            <person name="Bolling L.C."/>
            <person name="Coonrod S.A."/>
            <person name="Black M.B."/>
            <person name="Diekman A.B."/>
            <person name="Haystead T.A.J."/>
            <person name="Flickinger C.J."/>
            <person name="Herr J.C."/>
        </authorList>
    </citation>
    <scope>NUCLEOTIDE SEQUENCE [MRNA] (ISOFORM 1)</scope>
    <scope>PROTEIN SEQUENCE OF 88-109</scope>
    <scope>FUNCTION IN FERTILIZATION</scope>
    <scope>IDENTIFICATION BY MASS SPECTROMETRY</scope>
    <scope>SUBCELLULAR LOCATION</scope>
    <scope>TISSUE SPECIFICITY</scope>
    <source>
        <tissue>Testis</tissue>
    </source>
</reference>
<reference key="2">
    <citation type="journal article" date="2005" name="Biol. Reprod.">
        <title>Molecular cloning and characterization of three novel lysozyme-like genes, predominantly expressed in the male reproductive system of humans, belonging to the c-type lysozyme/alpha-lactalbumin family.</title>
        <authorList>
            <person name="Zhang K."/>
            <person name="Gao R."/>
            <person name="Zhang H."/>
            <person name="Cai X."/>
            <person name="Shen C."/>
            <person name="Wu C."/>
            <person name="Zhao S."/>
            <person name="Yu L."/>
        </authorList>
    </citation>
    <scope>NUCLEOTIDE SEQUENCE [GENOMIC DNA]</scope>
    <scope>TISSUE SPECIFICITY</scope>
    <source>
        <tissue>Testis</tissue>
    </source>
</reference>
<reference key="3">
    <citation type="journal article" date="2003" name="Genome Res.">
        <title>The secreted protein discovery initiative (SPDI), a large-scale effort to identify novel human secreted and transmembrane proteins: a bioinformatics assessment.</title>
        <authorList>
            <person name="Clark H.F."/>
            <person name="Gurney A.L."/>
            <person name="Abaya E."/>
            <person name="Baker K."/>
            <person name="Baldwin D.T."/>
            <person name="Brush J."/>
            <person name="Chen J."/>
            <person name="Chow B."/>
            <person name="Chui C."/>
            <person name="Crowley C."/>
            <person name="Currell B."/>
            <person name="Deuel B."/>
            <person name="Dowd P."/>
            <person name="Eaton D."/>
            <person name="Foster J.S."/>
            <person name="Grimaldi C."/>
            <person name="Gu Q."/>
            <person name="Hass P.E."/>
            <person name="Heldens S."/>
            <person name="Huang A."/>
            <person name="Kim H.S."/>
            <person name="Klimowski L."/>
            <person name="Jin Y."/>
            <person name="Johnson S."/>
            <person name="Lee J."/>
            <person name="Lewis L."/>
            <person name="Liao D."/>
            <person name="Mark M.R."/>
            <person name="Robbie E."/>
            <person name="Sanchez C."/>
            <person name="Schoenfeld J."/>
            <person name="Seshagiri S."/>
            <person name="Simmons L."/>
            <person name="Singh J."/>
            <person name="Smith V."/>
            <person name="Stinson J."/>
            <person name="Vagts A."/>
            <person name="Vandlen R.L."/>
            <person name="Watanabe C."/>
            <person name="Wieand D."/>
            <person name="Woods K."/>
            <person name="Xie M.-H."/>
            <person name="Yansura D.G."/>
            <person name="Yi S."/>
            <person name="Yu G."/>
            <person name="Yuan J."/>
            <person name="Zhang M."/>
            <person name="Zhang Z."/>
            <person name="Goddard A.D."/>
            <person name="Wood W.I."/>
            <person name="Godowski P.J."/>
            <person name="Gray A.M."/>
        </authorList>
    </citation>
    <scope>NUCLEOTIDE SEQUENCE [LARGE SCALE MRNA] (ISOFORM 2)</scope>
</reference>
<reference key="4">
    <citation type="journal article" date="2004" name="Genome Res.">
        <title>The status, quality, and expansion of the NIH full-length cDNA project: the Mammalian Gene Collection (MGC).</title>
        <authorList>
            <consortium name="The MGC Project Team"/>
        </authorList>
    </citation>
    <scope>NUCLEOTIDE SEQUENCE [LARGE SCALE MRNA]</scope>
</reference>
<reference key="5">
    <citation type="journal article" date="2004" name="Hum. Reprod.">
        <title>SPRASA, a novel sperm protein involved in immune-mediated infertility.</title>
        <authorList>
            <person name="Chiu W.W.C."/>
            <person name="Erikson E.K."/>
            <person name="Sole C.A."/>
            <person name="Shelling A.N."/>
            <person name="Chamley L.W."/>
        </authorList>
    </citation>
    <scope>IDENTIFICATION BY MASS SPECTROMETRY</scope>
    <source>
        <tissue>Sperm</tissue>
    </source>
</reference>
<keyword id="KW-0025">Alternative splicing</keyword>
<keyword id="KW-0968">Cytoplasmic vesicle</keyword>
<keyword id="KW-0903">Direct protein sequencing</keyword>
<keyword id="KW-1015">Disulfide bond</keyword>
<keyword id="KW-0472">Membrane</keyword>
<keyword id="KW-1267">Proteomics identification</keyword>
<keyword id="KW-1185">Reference proteome</keyword>
<keyword id="KW-0964">Secreted</keyword>
<keyword id="KW-0735">Signal-anchor</keyword>
<keyword id="KW-0812">Transmembrane</keyword>
<keyword id="KW-1133">Transmembrane helix</keyword>